<reference key="1">
    <citation type="journal article" date="2009" name="J. Bacteriol.">
        <title>Complete genome sequence and comparative genome analysis of enteropathogenic Escherichia coli O127:H6 strain E2348/69.</title>
        <authorList>
            <person name="Iguchi A."/>
            <person name="Thomson N.R."/>
            <person name="Ogura Y."/>
            <person name="Saunders D."/>
            <person name="Ooka T."/>
            <person name="Henderson I.R."/>
            <person name="Harris D."/>
            <person name="Asadulghani M."/>
            <person name="Kurokawa K."/>
            <person name="Dean P."/>
            <person name="Kenny B."/>
            <person name="Quail M.A."/>
            <person name="Thurston S."/>
            <person name="Dougan G."/>
            <person name="Hayashi T."/>
            <person name="Parkhill J."/>
            <person name="Frankel G."/>
        </authorList>
    </citation>
    <scope>NUCLEOTIDE SEQUENCE [LARGE SCALE GENOMIC DNA]</scope>
    <source>
        <strain>E2348/69 / EPEC</strain>
    </source>
</reference>
<protein>
    <recommendedName>
        <fullName evidence="1">L-arabinose isomerase</fullName>
        <ecNumber evidence="1">5.3.1.4</ecNumber>
    </recommendedName>
</protein>
<comment type="function">
    <text evidence="1">Catalyzes the conversion of L-arabinose to L-ribulose.</text>
</comment>
<comment type="catalytic activity">
    <reaction evidence="1">
        <text>beta-L-arabinopyranose = L-ribulose</text>
        <dbReference type="Rhea" id="RHEA:14821"/>
        <dbReference type="ChEBI" id="CHEBI:16880"/>
        <dbReference type="ChEBI" id="CHEBI:40886"/>
        <dbReference type="EC" id="5.3.1.4"/>
    </reaction>
</comment>
<comment type="cofactor">
    <cofactor evidence="1">
        <name>Mn(2+)</name>
        <dbReference type="ChEBI" id="CHEBI:29035"/>
    </cofactor>
    <text evidence="1">Binds 1 Mn(2+) ion per subunit.</text>
</comment>
<comment type="pathway">
    <text evidence="1">Carbohydrate degradation; L-arabinose degradation via L-ribulose; D-xylulose 5-phosphate from L-arabinose (bacterial route): step 1/3.</text>
</comment>
<comment type="subunit">
    <text evidence="1">Homohexamer.</text>
</comment>
<comment type="similarity">
    <text evidence="1">Belongs to the arabinose isomerase family.</text>
</comment>
<accession>B7UIA8</accession>
<keyword id="KW-0054">Arabinose catabolism</keyword>
<keyword id="KW-0119">Carbohydrate metabolism</keyword>
<keyword id="KW-0413">Isomerase</keyword>
<keyword id="KW-0464">Manganese</keyword>
<keyword id="KW-0479">Metal-binding</keyword>
<keyword id="KW-1185">Reference proteome</keyword>
<organism>
    <name type="scientific">Escherichia coli O127:H6 (strain E2348/69 / EPEC)</name>
    <dbReference type="NCBI Taxonomy" id="574521"/>
    <lineage>
        <taxon>Bacteria</taxon>
        <taxon>Pseudomonadati</taxon>
        <taxon>Pseudomonadota</taxon>
        <taxon>Gammaproteobacteria</taxon>
        <taxon>Enterobacterales</taxon>
        <taxon>Enterobacteriaceae</taxon>
        <taxon>Escherichia</taxon>
    </lineage>
</organism>
<dbReference type="EC" id="5.3.1.4" evidence="1"/>
<dbReference type="EMBL" id="FM180568">
    <property type="protein sequence ID" value="CAS07611.1"/>
    <property type="molecule type" value="Genomic_DNA"/>
</dbReference>
<dbReference type="RefSeq" id="WP_000151734.1">
    <property type="nucleotide sequence ID" value="NC_011601.1"/>
</dbReference>
<dbReference type="SMR" id="B7UIA8"/>
<dbReference type="GeneID" id="93777375"/>
<dbReference type="KEGG" id="ecg:E2348C_0063"/>
<dbReference type="HOGENOM" id="CLU_045663_0_0_6"/>
<dbReference type="UniPathway" id="UPA00145">
    <property type="reaction ID" value="UER00565"/>
</dbReference>
<dbReference type="Proteomes" id="UP000008205">
    <property type="component" value="Chromosome"/>
</dbReference>
<dbReference type="GO" id="GO:0005829">
    <property type="term" value="C:cytosol"/>
    <property type="evidence" value="ECO:0007669"/>
    <property type="project" value="TreeGrafter"/>
</dbReference>
<dbReference type="GO" id="GO:0008733">
    <property type="term" value="F:L-arabinose isomerase activity"/>
    <property type="evidence" value="ECO:0007669"/>
    <property type="project" value="UniProtKB-UniRule"/>
</dbReference>
<dbReference type="GO" id="GO:0030145">
    <property type="term" value="F:manganese ion binding"/>
    <property type="evidence" value="ECO:0007669"/>
    <property type="project" value="UniProtKB-UniRule"/>
</dbReference>
<dbReference type="GO" id="GO:0019569">
    <property type="term" value="P:L-arabinose catabolic process to xylulose 5-phosphate"/>
    <property type="evidence" value="ECO:0007669"/>
    <property type="project" value="UniProtKB-UniRule"/>
</dbReference>
<dbReference type="CDD" id="cd03557">
    <property type="entry name" value="L-arabinose_isomerase"/>
    <property type="match status" value="1"/>
</dbReference>
<dbReference type="FunFam" id="3.40.50.10940:FF:000001">
    <property type="entry name" value="L-arabinose isomerase"/>
    <property type="match status" value="1"/>
</dbReference>
<dbReference type="Gene3D" id="3.40.50.10940">
    <property type="match status" value="1"/>
</dbReference>
<dbReference type="HAMAP" id="MF_00519">
    <property type="entry name" value="Arabinose_Isome"/>
    <property type="match status" value="1"/>
</dbReference>
<dbReference type="InterPro" id="IPR024664">
    <property type="entry name" value="Ara_Isoase_C"/>
</dbReference>
<dbReference type="InterPro" id="IPR055390">
    <property type="entry name" value="AraA_central"/>
</dbReference>
<dbReference type="InterPro" id="IPR055389">
    <property type="entry name" value="AraA_N"/>
</dbReference>
<dbReference type="InterPro" id="IPR038583">
    <property type="entry name" value="AraA_N_sf"/>
</dbReference>
<dbReference type="InterPro" id="IPR004216">
    <property type="entry name" value="Fuc/Ara_isomerase_C"/>
</dbReference>
<dbReference type="InterPro" id="IPR009015">
    <property type="entry name" value="Fucose_isomerase_N/cen_sf"/>
</dbReference>
<dbReference type="InterPro" id="IPR003762">
    <property type="entry name" value="Lara_isomerase"/>
</dbReference>
<dbReference type="NCBIfam" id="NF002795">
    <property type="entry name" value="PRK02929.1"/>
    <property type="match status" value="1"/>
</dbReference>
<dbReference type="PANTHER" id="PTHR38464">
    <property type="entry name" value="L-ARABINOSE ISOMERASE"/>
    <property type="match status" value="1"/>
</dbReference>
<dbReference type="PANTHER" id="PTHR38464:SF1">
    <property type="entry name" value="L-ARABINOSE ISOMERASE"/>
    <property type="match status" value="1"/>
</dbReference>
<dbReference type="Pfam" id="PF24856">
    <property type="entry name" value="AraA_central"/>
    <property type="match status" value="1"/>
</dbReference>
<dbReference type="Pfam" id="PF02610">
    <property type="entry name" value="AraA_N"/>
    <property type="match status" value="1"/>
</dbReference>
<dbReference type="Pfam" id="PF11762">
    <property type="entry name" value="Arabinose_Iso_C"/>
    <property type="match status" value="1"/>
</dbReference>
<dbReference type="PIRSF" id="PIRSF001478">
    <property type="entry name" value="L-ara_isomerase"/>
    <property type="match status" value="1"/>
</dbReference>
<dbReference type="SUPFAM" id="SSF50443">
    <property type="entry name" value="FucI/AraA C-terminal domain-like"/>
    <property type="match status" value="1"/>
</dbReference>
<dbReference type="SUPFAM" id="SSF53743">
    <property type="entry name" value="FucI/AraA N-terminal and middle domains"/>
    <property type="match status" value="1"/>
</dbReference>
<evidence type="ECO:0000255" key="1">
    <source>
        <dbReference type="HAMAP-Rule" id="MF_00519"/>
    </source>
</evidence>
<name>ARAA_ECO27</name>
<gene>
    <name evidence="1" type="primary">araA</name>
    <name type="ordered locus">E2348C_0063</name>
</gene>
<feature type="chain" id="PRO_1000146225" description="L-arabinose isomerase">
    <location>
        <begin position="1"/>
        <end position="500"/>
    </location>
</feature>
<feature type="binding site" evidence="1">
    <location>
        <position position="306"/>
    </location>
    <ligand>
        <name>Mn(2+)</name>
        <dbReference type="ChEBI" id="CHEBI:29035"/>
    </ligand>
</feature>
<feature type="binding site" evidence="1">
    <location>
        <position position="333"/>
    </location>
    <ligand>
        <name>Mn(2+)</name>
        <dbReference type="ChEBI" id="CHEBI:29035"/>
    </ligand>
</feature>
<feature type="binding site" evidence="1">
    <location>
        <position position="350"/>
    </location>
    <ligand>
        <name>Mn(2+)</name>
        <dbReference type="ChEBI" id="CHEBI:29035"/>
    </ligand>
</feature>
<feature type="binding site" evidence="1">
    <location>
        <position position="450"/>
    </location>
    <ligand>
        <name>Mn(2+)</name>
        <dbReference type="ChEBI" id="CHEBI:29035"/>
    </ligand>
</feature>
<sequence>MTIFDNYEVWFVIGSQHLYGPETLRQVTQHAEHVVNALNTEAKLPCKLVLKPLGTTPDEITAICRDANYDDRCAGLVVWLHTFSPAKMWINGLTMLNKPLLQFHTQFNAALPWDSIDMDFMNLNQTAHGGREFGFIGARMRQQHAVVTGHWQDKQAHERIGSWMRQAVSKQDTRHLKVCRFGDNMREVAVTDGDKVAAQIKFGFSVNTWAVGDLVQVVNSISDGDVNALVDEYESCYTMTPATQIHGEKRQNVLEAARIELGMKRFLEQGGFHAFTTTFEDLHGLKQLPGLAVQRLMQQGYGFAGEGDWKTAALLRIMKVMSTGLQGGTSFMEDYTYHFEKGNDLVLGSHMLEVCPSIAVEEKPILDVQHLGIGGKDDPARLIFNTQTGPAIVASLIDLGDRYRLLVNCIDTVKTPHSLPKLPVANALWKAQPDLPTASEAWILAGGAHHTVFSHALNLNDMRQFAEMHDIEITVIDNDTRLPAFKDALRWNEVYYGFRR</sequence>
<proteinExistence type="inferred from homology"/>